<reference key="1">
    <citation type="journal article" date="2001" name="Nature">
        <title>Genome sequence of enterohaemorrhagic Escherichia coli O157:H7.</title>
        <authorList>
            <person name="Perna N.T."/>
            <person name="Plunkett G. III"/>
            <person name="Burland V."/>
            <person name="Mau B."/>
            <person name="Glasner J.D."/>
            <person name="Rose D.J."/>
            <person name="Mayhew G.F."/>
            <person name="Evans P.S."/>
            <person name="Gregor J."/>
            <person name="Kirkpatrick H.A."/>
            <person name="Posfai G."/>
            <person name="Hackett J."/>
            <person name="Klink S."/>
            <person name="Boutin A."/>
            <person name="Shao Y."/>
            <person name="Miller L."/>
            <person name="Grotbeck E.J."/>
            <person name="Davis N.W."/>
            <person name="Lim A."/>
            <person name="Dimalanta E.T."/>
            <person name="Potamousis K."/>
            <person name="Apodaca J."/>
            <person name="Anantharaman T.S."/>
            <person name="Lin J."/>
            <person name="Yen G."/>
            <person name="Schwartz D.C."/>
            <person name="Welch R.A."/>
            <person name="Blattner F.R."/>
        </authorList>
    </citation>
    <scope>NUCLEOTIDE SEQUENCE [LARGE SCALE GENOMIC DNA]</scope>
    <source>
        <strain>O157:H7 / EDL933 / ATCC 700927 / EHEC</strain>
    </source>
</reference>
<reference key="2">
    <citation type="journal article" date="2001" name="DNA Res.">
        <title>Complete genome sequence of enterohemorrhagic Escherichia coli O157:H7 and genomic comparison with a laboratory strain K-12.</title>
        <authorList>
            <person name="Hayashi T."/>
            <person name="Makino K."/>
            <person name="Ohnishi M."/>
            <person name="Kurokawa K."/>
            <person name="Ishii K."/>
            <person name="Yokoyama K."/>
            <person name="Han C.-G."/>
            <person name="Ohtsubo E."/>
            <person name="Nakayama K."/>
            <person name="Murata T."/>
            <person name="Tanaka M."/>
            <person name="Tobe T."/>
            <person name="Iida T."/>
            <person name="Takami H."/>
            <person name="Honda T."/>
            <person name="Sasakawa C."/>
            <person name="Ogasawara N."/>
            <person name="Yasunaga T."/>
            <person name="Kuhara S."/>
            <person name="Shiba T."/>
            <person name="Hattori M."/>
            <person name="Shinagawa H."/>
        </authorList>
    </citation>
    <scope>NUCLEOTIDE SEQUENCE [LARGE SCALE GENOMIC DNA]</scope>
    <source>
        <strain>O157:H7 / Sakai / RIMD 0509952 / EHEC</strain>
    </source>
</reference>
<gene>
    <name type="primary">kdsD</name>
    <name type="ordered locus">Z4560</name>
    <name type="ordered locus">ECs4076</name>
</gene>
<feature type="chain" id="PRO_0000136576" description="Arabinose 5-phosphate isomerase KdsD">
    <location>
        <begin position="1"/>
        <end position="328"/>
    </location>
</feature>
<feature type="domain" description="SIS" evidence="3">
    <location>
        <begin position="42"/>
        <end position="184"/>
    </location>
</feature>
<feature type="domain" description="CBS 1" evidence="2">
    <location>
        <begin position="210"/>
        <end position="268"/>
    </location>
</feature>
<feature type="domain" description="CBS 2" evidence="2">
    <location>
        <begin position="277"/>
        <end position="328"/>
    </location>
</feature>
<feature type="binding site" evidence="1">
    <location>
        <begin position="75"/>
        <end position="76"/>
    </location>
    <ligand>
        <name>substrate</name>
    </ligand>
</feature>
<feature type="binding site" evidence="1">
    <location>
        <position position="82"/>
    </location>
    <ligand>
        <name>substrate</name>
    </ligand>
</feature>
<feature type="binding site" evidence="1">
    <location>
        <position position="82"/>
    </location>
    <ligand>
        <name>Zn(2+)</name>
        <dbReference type="ChEBI" id="CHEBI:29105"/>
    </ligand>
</feature>
<feature type="binding site" evidence="1">
    <location>
        <position position="88"/>
    </location>
    <ligand>
        <name>substrate</name>
    </ligand>
</feature>
<feature type="binding site" evidence="1">
    <location>
        <begin position="114"/>
        <end position="123"/>
    </location>
    <ligand>
        <name>substrate</name>
    </ligand>
</feature>
<feature type="binding site" evidence="1">
    <location>
        <begin position="148"/>
        <end position="150"/>
    </location>
    <ligand>
        <name>substrate</name>
    </ligand>
</feature>
<feature type="binding site" evidence="1">
    <location>
        <position position="222"/>
    </location>
    <ligand>
        <name>substrate</name>
    </ligand>
</feature>
<feature type="binding site" evidence="1">
    <location>
        <position position="275"/>
    </location>
    <ligand>
        <name>substrate</name>
    </ligand>
</feature>
<feature type="site" description="Catalytically relevant" evidence="1">
    <location>
        <position position="59"/>
    </location>
</feature>
<feature type="site" description="Catalytically relevant" evidence="1">
    <location>
        <position position="111"/>
    </location>
</feature>
<feature type="site" description="Catalytically relevant" evidence="1">
    <location>
        <position position="152"/>
    </location>
</feature>
<feature type="site" description="Catalytically relevant" evidence="1">
    <location>
        <position position="193"/>
    </location>
</feature>
<protein>
    <recommendedName>
        <fullName>Arabinose 5-phosphate isomerase KdsD</fullName>
        <shortName>API</shortName>
        <shortName>L-API</shortName>
        <ecNumber>5.3.1.13</ecNumber>
    </recommendedName>
</protein>
<accession>Q8X9J0</accession>
<name>KDSD_ECO57</name>
<proteinExistence type="inferred from homology"/>
<keyword id="KW-0119">Carbohydrate metabolism</keyword>
<keyword id="KW-0129">CBS domain</keyword>
<keyword id="KW-0413">Isomerase</keyword>
<keyword id="KW-0448">Lipopolysaccharide biosynthesis</keyword>
<keyword id="KW-0479">Metal-binding</keyword>
<keyword id="KW-1185">Reference proteome</keyword>
<keyword id="KW-0677">Repeat</keyword>
<keyword id="KW-0862">Zinc</keyword>
<organism>
    <name type="scientific">Escherichia coli O157:H7</name>
    <dbReference type="NCBI Taxonomy" id="83334"/>
    <lineage>
        <taxon>Bacteria</taxon>
        <taxon>Pseudomonadati</taxon>
        <taxon>Pseudomonadota</taxon>
        <taxon>Gammaproteobacteria</taxon>
        <taxon>Enterobacterales</taxon>
        <taxon>Enterobacteriaceae</taxon>
        <taxon>Escherichia</taxon>
    </lineage>
</organism>
<sequence length="328" mass="35210">MSHVELQPGFDFQQAGKEVLAIERECLAELDQYINQNFTLACEKMFWCKGKVVVMGMGKSGHIGRKMAATFASTGTPSFFVHPGEAAHGDLGMVTPQDVVIAISNSGESSEITALIPVLKRLHIPLICITGRPESSMARAADVHLCVKVAKEACPLGLAPTSSTTATLVMGDALAVALLKARGFTAEDFALSHPGGALGRKLLLRVNDIMHTGDEIPHVKKTASLRDALLEVTRKNLGMTVICDDNMMIEGIFTDGDLRRVFDMGVDVRQLSIADVMTPGGIRVRPGILAVEALNLMQSRHITSVMVADGDHLLGVLHMHDLLRAGVV</sequence>
<dbReference type="EC" id="5.3.1.13"/>
<dbReference type="EMBL" id="AE005174">
    <property type="protein sequence ID" value="AAG58331.1"/>
    <property type="molecule type" value="Genomic_DNA"/>
</dbReference>
<dbReference type="EMBL" id="BA000007">
    <property type="protein sequence ID" value="BAB37499.1"/>
    <property type="molecule type" value="Genomic_DNA"/>
</dbReference>
<dbReference type="PIR" id="D91138">
    <property type="entry name" value="D91138"/>
</dbReference>
<dbReference type="PIR" id="G85983">
    <property type="entry name" value="G85983"/>
</dbReference>
<dbReference type="RefSeq" id="NP_312103.1">
    <property type="nucleotide sequence ID" value="NC_002695.1"/>
</dbReference>
<dbReference type="RefSeq" id="WP_001302021.1">
    <property type="nucleotide sequence ID" value="NZ_VOAI01000014.1"/>
</dbReference>
<dbReference type="SMR" id="Q8X9J0"/>
<dbReference type="STRING" id="155864.Z4560"/>
<dbReference type="GeneID" id="916080"/>
<dbReference type="KEGG" id="ece:Z4560"/>
<dbReference type="KEGG" id="ecs:ECs_4076"/>
<dbReference type="PATRIC" id="fig|386585.9.peg.4255"/>
<dbReference type="eggNOG" id="COG0517">
    <property type="taxonomic scope" value="Bacteria"/>
</dbReference>
<dbReference type="eggNOG" id="COG0794">
    <property type="taxonomic scope" value="Bacteria"/>
</dbReference>
<dbReference type="HOGENOM" id="CLU_040681_13_1_6"/>
<dbReference type="OMA" id="LMACLMR"/>
<dbReference type="UniPathway" id="UPA00030"/>
<dbReference type="UniPathway" id="UPA00357">
    <property type="reaction ID" value="UER00473"/>
</dbReference>
<dbReference type="Proteomes" id="UP000000558">
    <property type="component" value="Chromosome"/>
</dbReference>
<dbReference type="Proteomes" id="UP000002519">
    <property type="component" value="Chromosome"/>
</dbReference>
<dbReference type="GO" id="GO:0019146">
    <property type="term" value="F:arabinose-5-phosphate isomerase activity"/>
    <property type="evidence" value="ECO:0007669"/>
    <property type="project" value="UniProtKB-EC"/>
</dbReference>
<dbReference type="GO" id="GO:0097367">
    <property type="term" value="F:carbohydrate derivative binding"/>
    <property type="evidence" value="ECO:0007669"/>
    <property type="project" value="InterPro"/>
</dbReference>
<dbReference type="GO" id="GO:0046872">
    <property type="term" value="F:metal ion binding"/>
    <property type="evidence" value="ECO:0007669"/>
    <property type="project" value="UniProtKB-KW"/>
</dbReference>
<dbReference type="GO" id="GO:0009103">
    <property type="term" value="P:lipopolysaccharide biosynthetic process"/>
    <property type="evidence" value="ECO:0007669"/>
    <property type="project" value="UniProtKB-UniPathway"/>
</dbReference>
<dbReference type="CDD" id="cd04604">
    <property type="entry name" value="CBS_pair_SIS_assoc"/>
    <property type="match status" value="1"/>
</dbReference>
<dbReference type="CDD" id="cd05014">
    <property type="entry name" value="SIS_Kpsf"/>
    <property type="match status" value="1"/>
</dbReference>
<dbReference type="FunFam" id="3.10.580.10:FF:000007">
    <property type="entry name" value="Arabinose 5-phosphate isomerase"/>
    <property type="match status" value="1"/>
</dbReference>
<dbReference type="FunFam" id="3.40.50.10490:FF:000011">
    <property type="entry name" value="Arabinose 5-phosphate isomerase"/>
    <property type="match status" value="1"/>
</dbReference>
<dbReference type="Gene3D" id="3.10.580.10">
    <property type="entry name" value="CBS-domain"/>
    <property type="match status" value="1"/>
</dbReference>
<dbReference type="Gene3D" id="3.40.50.10490">
    <property type="entry name" value="Glucose-6-phosphate isomerase like protein, domain 1"/>
    <property type="match status" value="1"/>
</dbReference>
<dbReference type="InterPro" id="IPR000644">
    <property type="entry name" value="CBS_dom"/>
</dbReference>
<dbReference type="InterPro" id="IPR046342">
    <property type="entry name" value="CBS_dom_sf"/>
</dbReference>
<dbReference type="InterPro" id="IPR050986">
    <property type="entry name" value="GutQ/KpsF_isomerases"/>
</dbReference>
<dbReference type="InterPro" id="IPR004800">
    <property type="entry name" value="KdsD/KpsF-type"/>
</dbReference>
<dbReference type="InterPro" id="IPR001347">
    <property type="entry name" value="SIS_dom"/>
</dbReference>
<dbReference type="InterPro" id="IPR046348">
    <property type="entry name" value="SIS_dom_sf"/>
</dbReference>
<dbReference type="InterPro" id="IPR035474">
    <property type="entry name" value="SIS_Kpsf"/>
</dbReference>
<dbReference type="NCBIfam" id="TIGR00393">
    <property type="entry name" value="kpsF"/>
    <property type="match status" value="1"/>
</dbReference>
<dbReference type="NCBIfam" id="NF008141">
    <property type="entry name" value="PRK10892.1"/>
    <property type="match status" value="1"/>
</dbReference>
<dbReference type="PANTHER" id="PTHR42745">
    <property type="match status" value="1"/>
</dbReference>
<dbReference type="PANTHER" id="PTHR42745:SF1">
    <property type="entry name" value="ARABINOSE 5-PHOSPHATE ISOMERASE KDSD"/>
    <property type="match status" value="1"/>
</dbReference>
<dbReference type="Pfam" id="PF00571">
    <property type="entry name" value="CBS"/>
    <property type="match status" value="2"/>
</dbReference>
<dbReference type="Pfam" id="PF01380">
    <property type="entry name" value="SIS"/>
    <property type="match status" value="1"/>
</dbReference>
<dbReference type="PIRSF" id="PIRSF004692">
    <property type="entry name" value="KdsD_KpsF"/>
    <property type="match status" value="1"/>
</dbReference>
<dbReference type="SUPFAM" id="SSF53697">
    <property type="entry name" value="SIS domain"/>
    <property type="match status" value="1"/>
</dbReference>
<dbReference type="PROSITE" id="PS51371">
    <property type="entry name" value="CBS"/>
    <property type="match status" value="2"/>
</dbReference>
<dbReference type="PROSITE" id="PS51464">
    <property type="entry name" value="SIS"/>
    <property type="match status" value="1"/>
</dbReference>
<evidence type="ECO:0000250" key="1"/>
<evidence type="ECO:0000255" key="2">
    <source>
        <dbReference type="PROSITE-ProRule" id="PRU00703"/>
    </source>
</evidence>
<evidence type="ECO:0000255" key="3">
    <source>
        <dbReference type="PROSITE-ProRule" id="PRU00797"/>
    </source>
</evidence>
<evidence type="ECO:0000305" key="4"/>
<comment type="function">
    <text evidence="1">Involved in the biosynthesis of 3-deoxy-D-manno-octulosonate (KDO), a unique 8-carbon sugar component of lipopolysaccharides (LPSs). Catalyzes the reversible aldol-ketol isomerization between D-ribulose 5-phosphate (Ru5P) and D-arabinose 5-phosphate (A5P) (By similarity).</text>
</comment>
<comment type="catalytic activity">
    <reaction>
        <text>D-arabinose 5-phosphate = D-ribulose 5-phosphate</text>
        <dbReference type="Rhea" id="RHEA:23104"/>
        <dbReference type="ChEBI" id="CHEBI:57693"/>
        <dbReference type="ChEBI" id="CHEBI:58121"/>
        <dbReference type="EC" id="5.3.1.13"/>
    </reaction>
</comment>
<comment type="pathway">
    <text>Carbohydrate biosynthesis; 3-deoxy-D-manno-octulosonate biosynthesis; 3-deoxy-D-manno-octulosonate from D-ribulose 5-phosphate: step 1/3.</text>
</comment>
<comment type="pathway">
    <text>Bacterial outer membrane biogenesis; lipopolysaccharide biosynthesis.</text>
</comment>
<comment type="subunit">
    <text evidence="1">Homotetramer.</text>
</comment>
<comment type="similarity">
    <text evidence="4">Belongs to the SIS family. GutQ/KpsF subfamily.</text>
</comment>